<reference key="1">
    <citation type="journal article" date="1998" name="Nature">
        <title>Deciphering the biology of Mycobacterium tuberculosis from the complete genome sequence.</title>
        <authorList>
            <person name="Cole S.T."/>
            <person name="Brosch R."/>
            <person name="Parkhill J."/>
            <person name="Garnier T."/>
            <person name="Churcher C.M."/>
            <person name="Harris D.E."/>
            <person name="Gordon S.V."/>
            <person name="Eiglmeier K."/>
            <person name="Gas S."/>
            <person name="Barry C.E. III"/>
            <person name="Tekaia F."/>
            <person name="Badcock K."/>
            <person name="Basham D."/>
            <person name="Brown D."/>
            <person name="Chillingworth T."/>
            <person name="Connor R."/>
            <person name="Davies R.M."/>
            <person name="Devlin K."/>
            <person name="Feltwell T."/>
            <person name="Gentles S."/>
            <person name="Hamlin N."/>
            <person name="Holroyd S."/>
            <person name="Hornsby T."/>
            <person name="Jagels K."/>
            <person name="Krogh A."/>
            <person name="McLean J."/>
            <person name="Moule S."/>
            <person name="Murphy L.D."/>
            <person name="Oliver S."/>
            <person name="Osborne J."/>
            <person name="Quail M.A."/>
            <person name="Rajandream M.A."/>
            <person name="Rogers J."/>
            <person name="Rutter S."/>
            <person name="Seeger K."/>
            <person name="Skelton S."/>
            <person name="Squares S."/>
            <person name="Squares R."/>
            <person name="Sulston J.E."/>
            <person name="Taylor K."/>
            <person name="Whitehead S."/>
            <person name="Barrell B.G."/>
        </authorList>
    </citation>
    <scope>NUCLEOTIDE SEQUENCE [LARGE SCALE GENOMIC DNA]</scope>
    <source>
        <strain>ATCC 25618 / H37Rv</strain>
    </source>
</reference>
<reference key="2">
    <citation type="journal article" date="2008" name="BMC Syst. Biol.">
        <title>targetTB: a target identification pipeline for Mycobacterium tuberculosis through an interactome, reactome and genome-scale structural analysis.</title>
        <authorList>
            <person name="Raman K."/>
            <person name="Yeturu K."/>
            <person name="Chandra N."/>
        </authorList>
    </citation>
    <scope>IDENTIFICATION AS A DRUG TARGET [LARGE SCALE ANALYSIS]</scope>
</reference>
<reference key="3">
    <citation type="journal article" date="2011" name="Mol. Cell. Proteomics">
        <title>Proteogenomic analysis of Mycobacterium tuberculosis by high resolution mass spectrometry.</title>
        <authorList>
            <person name="Kelkar D.S."/>
            <person name="Kumar D."/>
            <person name="Kumar P."/>
            <person name="Balakrishnan L."/>
            <person name="Muthusamy B."/>
            <person name="Yadav A.K."/>
            <person name="Shrivastava P."/>
            <person name="Marimuthu A."/>
            <person name="Anand S."/>
            <person name="Sundaram H."/>
            <person name="Kingsbury R."/>
            <person name="Harsha H.C."/>
            <person name="Nair B."/>
            <person name="Prasad T.S."/>
            <person name="Chauhan D.S."/>
            <person name="Katoch K."/>
            <person name="Katoch V.M."/>
            <person name="Kumar P."/>
            <person name="Chaerkady R."/>
            <person name="Ramachandran S."/>
            <person name="Dash D."/>
            <person name="Pandey A."/>
        </authorList>
    </citation>
    <scope>IDENTIFICATION BY MASS SPECTROMETRY [LARGE SCALE ANALYSIS]</scope>
    <source>
        <strain>ATCC 25618 / H37Rv</strain>
    </source>
</reference>
<feature type="chain" id="PRO_0000415509" description="Putative oxidoreductase Rv1856c">
    <location>
        <begin position="1"/>
        <end position="223"/>
    </location>
</feature>
<feature type="binding site" evidence="1">
    <location>
        <begin position="4"/>
        <end position="28"/>
    </location>
    <ligand>
        <name>NADP(+)</name>
        <dbReference type="ChEBI" id="CHEBI:58349"/>
    </ligand>
</feature>
<feature type="binding site" evidence="1">
    <location>
        <position position="128"/>
    </location>
    <ligand>
        <name>substrate</name>
    </ligand>
</feature>
<protein>
    <recommendedName>
        <fullName>Putative oxidoreductase Rv1856c</fullName>
        <ecNumber>1.-.-.-</ecNumber>
    </recommendedName>
</protein>
<comment type="miscellaneous">
    <text>Was identified as a high-confidence drug target.</text>
</comment>
<comment type="similarity">
    <text evidence="2">Belongs to the short-chain dehydrogenases/reductases (SDR) family.</text>
</comment>
<comment type="sequence caution">
    <conflict type="erroneous initiation">
        <sequence resource="EMBL-CDS" id="CCP44622"/>
    </conflict>
    <text>Extended N-terminus.</text>
</comment>
<organism>
    <name type="scientific">Mycobacterium tuberculosis (strain ATCC 25618 / H37Rv)</name>
    <dbReference type="NCBI Taxonomy" id="83332"/>
    <lineage>
        <taxon>Bacteria</taxon>
        <taxon>Bacillati</taxon>
        <taxon>Actinomycetota</taxon>
        <taxon>Actinomycetes</taxon>
        <taxon>Mycobacteriales</taxon>
        <taxon>Mycobacteriaceae</taxon>
        <taxon>Mycobacterium</taxon>
        <taxon>Mycobacterium tuberculosis complex</taxon>
    </lineage>
</organism>
<dbReference type="EC" id="1.-.-.-"/>
<dbReference type="EMBL" id="AL123456">
    <property type="protein sequence ID" value="CCP44622.1"/>
    <property type="status" value="ALT_INIT"/>
    <property type="molecule type" value="Genomic_DNA"/>
</dbReference>
<dbReference type="PIR" id="H70665">
    <property type="entry name" value="H70665"/>
</dbReference>
<dbReference type="RefSeq" id="NP_216372.1">
    <property type="nucleotide sequence ID" value="NC_000962.3"/>
</dbReference>
<dbReference type="SMR" id="P9WGQ1"/>
<dbReference type="STRING" id="83332.Rv1856c"/>
<dbReference type="PaxDb" id="83332-Rv1856c"/>
<dbReference type="DNASU" id="885708"/>
<dbReference type="GeneID" id="885708"/>
<dbReference type="KEGG" id="mtu:Rv1856c"/>
<dbReference type="TubercuList" id="Rv1856c"/>
<dbReference type="eggNOG" id="COG1028">
    <property type="taxonomic scope" value="Bacteria"/>
</dbReference>
<dbReference type="InParanoid" id="P9WGQ1"/>
<dbReference type="OrthoDB" id="3210335at2"/>
<dbReference type="Proteomes" id="UP000001584">
    <property type="component" value="Chromosome"/>
</dbReference>
<dbReference type="GO" id="GO:0005886">
    <property type="term" value="C:plasma membrane"/>
    <property type="evidence" value="ECO:0007005"/>
    <property type="project" value="MTBBASE"/>
</dbReference>
<dbReference type="GO" id="GO:0016616">
    <property type="term" value="F:oxidoreductase activity, acting on the CH-OH group of donors, NAD or NADP as acceptor"/>
    <property type="evidence" value="ECO:0000318"/>
    <property type="project" value="GO_Central"/>
</dbReference>
<dbReference type="GO" id="GO:0030497">
    <property type="term" value="P:fatty acid elongation"/>
    <property type="evidence" value="ECO:0000318"/>
    <property type="project" value="GO_Central"/>
</dbReference>
<dbReference type="CDD" id="cd05233">
    <property type="entry name" value="SDR_c"/>
    <property type="match status" value="1"/>
</dbReference>
<dbReference type="Gene3D" id="3.40.50.720">
    <property type="entry name" value="NAD(P)-binding Rossmann-like Domain"/>
    <property type="match status" value="1"/>
</dbReference>
<dbReference type="InterPro" id="IPR036291">
    <property type="entry name" value="NAD(P)-bd_dom_sf"/>
</dbReference>
<dbReference type="InterPro" id="IPR002347">
    <property type="entry name" value="SDR_fam"/>
</dbReference>
<dbReference type="NCBIfam" id="NF004534">
    <property type="entry name" value="PRK05884.1"/>
    <property type="match status" value="1"/>
</dbReference>
<dbReference type="PANTHER" id="PTHR42760:SF40">
    <property type="entry name" value="3-OXOACYL-[ACYL-CARRIER-PROTEIN] REDUCTASE, CHLOROPLASTIC"/>
    <property type="match status" value="1"/>
</dbReference>
<dbReference type="PANTHER" id="PTHR42760">
    <property type="entry name" value="SHORT-CHAIN DEHYDROGENASES/REDUCTASES FAMILY MEMBER"/>
    <property type="match status" value="1"/>
</dbReference>
<dbReference type="Pfam" id="PF13561">
    <property type="entry name" value="adh_short_C2"/>
    <property type="match status" value="1"/>
</dbReference>
<dbReference type="SUPFAM" id="SSF51735">
    <property type="entry name" value="NAD(P)-binding Rossmann-fold domains"/>
    <property type="match status" value="1"/>
</dbReference>
<accession>P9WGQ1</accession>
<accession>L0T7W6</accession>
<accession>P95158</accession>
<accession>Q7D7W5</accession>
<keyword id="KW-0560">Oxidoreductase</keyword>
<keyword id="KW-1185">Reference proteome</keyword>
<evidence type="ECO:0000250" key="1"/>
<evidence type="ECO:0000305" key="2"/>
<sequence>MEVLVTGGDTDLGRTMAEGFRNDGHKVTLVGARRGDLEVAAKELDVDAVVCDTTDPTSLTEARGLFPRHLDTIVNVPAPSWDAGDPRAYSVSDTANAWRNALDATVLSVVLTVQSVGDHLRSGGSIVSVVAENPPAGGAESAIKAALSNWIAGQAAVFGTRGITINTVACGRSVQTGYEGLSRTPAPVAAEIARLALFLTTPAARHITGQTLHVSHGALAHFG</sequence>
<proteinExistence type="evidence at protein level"/>
<gene>
    <name type="ordered locus">Rv1856c</name>
</gene>
<name>Y1856_MYCTU</name>